<name>TTDR_ECOUT</name>
<keyword id="KW-0010">Activator</keyword>
<keyword id="KW-0238">DNA-binding</keyword>
<keyword id="KW-0804">Transcription</keyword>
<keyword id="KW-0805">Transcription regulation</keyword>
<comment type="function">
    <text evidence="1">Positive regulator required for L-tartrate-dependent anaerobic growth on glycerol. Induces expression of the ttdA-ttdB-ygjE operon (By similarity).</text>
</comment>
<comment type="similarity">
    <text evidence="3">Belongs to the LysR transcriptional regulatory family.</text>
</comment>
<comment type="sequence caution" evidence="3">
    <conflict type="erroneous initiation">
        <sequence resource="EMBL-CDS" id="ABE08943"/>
    </conflict>
</comment>
<organism>
    <name type="scientific">Escherichia coli (strain UTI89 / UPEC)</name>
    <dbReference type="NCBI Taxonomy" id="364106"/>
    <lineage>
        <taxon>Bacteria</taxon>
        <taxon>Pseudomonadati</taxon>
        <taxon>Pseudomonadota</taxon>
        <taxon>Gammaproteobacteria</taxon>
        <taxon>Enterobacterales</taxon>
        <taxon>Enterobacteriaceae</taxon>
        <taxon>Escherichia</taxon>
    </lineage>
</organism>
<proteinExistence type="inferred from homology"/>
<gene>
    <name type="primary">ttdR</name>
    <name type="ordered locus">UTI89_C3496</name>
</gene>
<accession>Q1R6S1</accession>
<dbReference type="EMBL" id="CP000243">
    <property type="protein sequence ID" value="ABE08943.1"/>
    <property type="status" value="ALT_INIT"/>
    <property type="molecule type" value="Genomic_DNA"/>
</dbReference>
<dbReference type="RefSeq" id="WP_000935202.1">
    <property type="nucleotide sequence ID" value="NZ_CP064825.1"/>
</dbReference>
<dbReference type="SMR" id="Q1R6S1"/>
<dbReference type="KEGG" id="eci:UTI89_C3496"/>
<dbReference type="HOGENOM" id="CLU_039613_16_4_6"/>
<dbReference type="Proteomes" id="UP000001952">
    <property type="component" value="Chromosome"/>
</dbReference>
<dbReference type="GO" id="GO:0003700">
    <property type="term" value="F:DNA-binding transcription factor activity"/>
    <property type="evidence" value="ECO:0007669"/>
    <property type="project" value="InterPro"/>
</dbReference>
<dbReference type="GO" id="GO:0043565">
    <property type="term" value="F:sequence-specific DNA binding"/>
    <property type="evidence" value="ECO:0007669"/>
    <property type="project" value="TreeGrafter"/>
</dbReference>
<dbReference type="GO" id="GO:0006351">
    <property type="term" value="P:DNA-templated transcription"/>
    <property type="evidence" value="ECO:0007669"/>
    <property type="project" value="TreeGrafter"/>
</dbReference>
<dbReference type="CDD" id="cd08479">
    <property type="entry name" value="PBP2_CrgA_like_9"/>
    <property type="match status" value="1"/>
</dbReference>
<dbReference type="FunFam" id="1.10.10.10:FF:000238">
    <property type="entry name" value="HTH-type transcriptional activator TtdR"/>
    <property type="match status" value="1"/>
</dbReference>
<dbReference type="FunFam" id="3.40.190.290:FF:000001">
    <property type="entry name" value="Transcriptional regulator, LysR family"/>
    <property type="match status" value="1"/>
</dbReference>
<dbReference type="Gene3D" id="3.40.190.290">
    <property type="match status" value="1"/>
</dbReference>
<dbReference type="Gene3D" id="1.10.10.10">
    <property type="entry name" value="Winged helix-like DNA-binding domain superfamily/Winged helix DNA-binding domain"/>
    <property type="match status" value="1"/>
</dbReference>
<dbReference type="InterPro" id="IPR005119">
    <property type="entry name" value="LysR_subst-bd"/>
</dbReference>
<dbReference type="InterPro" id="IPR000847">
    <property type="entry name" value="Tscrpt_reg_HTH_LysR"/>
</dbReference>
<dbReference type="InterPro" id="IPR036388">
    <property type="entry name" value="WH-like_DNA-bd_sf"/>
</dbReference>
<dbReference type="InterPro" id="IPR036390">
    <property type="entry name" value="WH_DNA-bd_sf"/>
</dbReference>
<dbReference type="NCBIfam" id="NF007315">
    <property type="entry name" value="PRK09801.1"/>
    <property type="match status" value="1"/>
</dbReference>
<dbReference type="PANTHER" id="PTHR30537:SF5">
    <property type="entry name" value="HTH-TYPE TRANSCRIPTIONAL ACTIVATOR TTDR-RELATED"/>
    <property type="match status" value="1"/>
</dbReference>
<dbReference type="PANTHER" id="PTHR30537">
    <property type="entry name" value="HTH-TYPE TRANSCRIPTIONAL REGULATOR"/>
    <property type="match status" value="1"/>
</dbReference>
<dbReference type="Pfam" id="PF00126">
    <property type="entry name" value="HTH_1"/>
    <property type="match status" value="1"/>
</dbReference>
<dbReference type="Pfam" id="PF03466">
    <property type="entry name" value="LysR_substrate"/>
    <property type="match status" value="1"/>
</dbReference>
<dbReference type="SUPFAM" id="SSF53850">
    <property type="entry name" value="Periplasmic binding protein-like II"/>
    <property type="match status" value="1"/>
</dbReference>
<dbReference type="SUPFAM" id="SSF46785">
    <property type="entry name" value="Winged helix' DNA-binding domain"/>
    <property type="match status" value="1"/>
</dbReference>
<dbReference type="PROSITE" id="PS50931">
    <property type="entry name" value="HTH_LYSR"/>
    <property type="match status" value="1"/>
</dbReference>
<evidence type="ECO:0000250" key="1"/>
<evidence type="ECO:0000255" key="2">
    <source>
        <dbReference type="PROSITE-ProRule" id="PRU00253"/>
    </source>
</evidence>
<evidence type="ECO:0000305" key="3"/>
<reference key="1">
    <citation type="journal article" date="2006" name="Proc. Natl. Acad. Sci. U.S.A.">
        <title>Identification of genes subject to positive selection in uropathogenic strains of Escherichia coli: a comparative genomics approach.</title>
        <authorList>
            <person name="Chen S.L."/>
            <person name="Hung C.-S."/>
            <person name="Xu J."/>
            <person name="Reigstad C.S."/>
            <person name="Magrini V."/>
            <person name="Sabo A."/>
            <person name="Blasiar D."/>
            <person name="Bieri T."/>
            <person name="Meyer R.R."/>
            <person name="Ozersky P."/>
            <person name="Armstrong J.R."/>
            <person name="Fulton R.S."/>
            <person name="Latreille J.P."/>
            <person name="Spieth J."/>
            <person name="Hooton T.M."/>
            <person name="Mardis E.R."/>
            <person name="Hultgren S.J."/>
            <person name="Gordon J.I."/>
        </authorList>
    </citation>
    <scope>NUCLEOTIDE SEQUENCE [LARGE SCALE GENOMIC DNA]</scope>
    <source>
        <strain>UTI89 / UPEC</strain>
    </source>
</reference>
<protein>
    <recommendedName>
        <fullName>HTH-type transcriptional activator TtdR</fullName>
    </recommendedName>
</protein>
<feature type="chain" id="PRO_0000262710" description="HTH-type transcriptional activator TtdR">
    <location>
        <begin position="1"/>
        <end position="310"/>
    </location>
</feature>
<feature type="domain" description="HTH lysR-type" evidence="2">
    <location>
        <begin position="6"/>
        <end position="63"/>
    </location>
</feature>
<feature type="DNA-binding region" description="H-T-H motif" evidence="2">
    <location>
        <begin position="23"/>
        <end position="42"/>
    </location>
</feature>
<sequence length="310" mass="35285">MLNSWPLAKDLQVLVEIVHSGSFSAAAATLGQTPAFVTKRIQILENTLATTLLNRSARGVALTESGQRCYEHALEILTQYQRLVDDVTQIKTRPEGMIRIGCSFGFGRSHIAPAITELMRNYPELQVHFELFDRQIDLVQDNIDLDIRINDAIPDYYIAHLLTKNKRILCAAPEYLQKYPQPQSLQELSRHDCLVTKERDMTHGIWELGNGQEKKSVKVSGHLSSNSGEIVLQWALEGKGIMLRSEWDVLPFLESGKLVRVLPEYAQSANIWAVYREPLYRSMKLRVCVEFLAAWCQQRLGKPDEGYQVM</sequence>